<name>CAS3_HALVD</name>
<gene>
    <name type="primary">cas3</name>
    <name type="ordered locus">HVO_A0209</name>
    <name type="ORF">C498_09721</name>
</gene>
<feature type="chain" id="PRO_0000432150" description="CRISPR-associated nuclease/helicase Cas3">
    <location>
        <begin position="1"/>
        <end position="937"/>
    </location>
</feature>
<feature type="domain" description="HD Cas3-type" evidence="3">
    <location>
        <begin position="24"/>
        <end position="232"/>
    </location>
</feature>
<feature type="binding site" evidence="2">
    <location>
        <position position="64"/>
    </location>
    <ligand>
        <name>Mg(2+)</name>
        <dbReference type="ChEBI" id="CHEBI:18420"/>
    </ligand>
</feature>
<feature type="binding site" evidence="2">
    <location>
        <position position="122"/>
    </location>
    <ligand>
        <name>Mg(2+)</name>
        <dbReference type="ChEBI" id="CHEBI:18420"/>
    </ligand>
</feature>
<comment type="function">
    <text evidence="1 4">CRISPR (clustered regularly interspaced short palindromic repeat), is an adaptive immune system that provides protection against mobile genetic elements (viruses, transposable elements and conjugative plasmids). CRISPR clusters contain sequences complementary to antecedent mobile elements and target invading nucleic acids. CRISPR clusters are transcribed and processed into CRISPR RNA (crRNA). This protein plus Cascade participate in CRISPR interference, the third stage of CRISPR immunity (By similarity). Plasmid targeted by CRISPR locus P1 transform wild-type cells very poorly (PubMed:22767603).</text>
</comment>
<comment type="cofactor">
    <cofactor evidence="2">
        <name>Mg(2+)</name>
        <dbReference type="ChEBI" id="CHEBI:18420"/>
    </cofactor>
</comment>
<comment type="disruption phenotype">
    <text evidence="4">Loss of the 8 Cas genes in this locus (cas1, cas2, cas3, cas4, cas5, cas6, cas7 and cas8b) leads to loss of CRISPR interference against plasmid targeted by this CRISPR locus, i.e. plasmid is not destroyed by CRISPR. Disruption of this single gene also leads to loss of CRISPR interference.</text>
</comment>
<comment type="miscellaneous">
    <text evidence="5 6">There are 3 CRISPR RNA loci in this organism and a single cas gene locus. A CRISPR-Cas type I-B system.</text>
</comment>
<comment type="similarity">
    <text evidence="7">In the N-terminal section; belongs to the CRISPR-associated nuclease Cas3-HD family.</text>
</comment>
<comment type="similarity">
    <text evidence="7">In the central section; belongs to the CRISPR-associated helicase Cas3 family.</text>
</comment>
<protein>
    <recommendedName>
        <fullName evidence="6">CRISPR-associated nuclease/helicase Cas3</fullName>
        <ecNumber>3.1.-.-</ecNumber>
        <ecNumber>3.6.4.-</ecNumber>
    </recommendedName>
</protein>
<keyword id="KW-0051">Antiviral defense</keyword>
<keyword id="KW-0067">ATP-binding</keyword>
<keyword id="KW-0347">Helicase</keyword>
<keyword id="KW-0378">Hydrolase</keyword>
<keyword id="KW-0460">Magnesium</keyword>
<keyword id="KW-0479">Metal-binding</keyword>
<keyword id="KW-0540">Nuclease</keyword>
<keyword id="KW-0547">Nucleotide-binding</keyword>
<keyword id="KW-0614">Plasmid</keyword>
<keyword id="KW-1185">Reference proteome</keyword>
<accession>D4GQN8</accession>
<reference key="1">
    <citation type="journal article" date="2010" name="PLoS ONE">
        <title>The complete genome sequence of Haloferax volcanii DS2, a model archaeon.</title>
        <authorList>
            <person name="Hartman A.L."/>
            <person name="Norais C."/>
            <person name="Badger J.H."/>
            <person name="Delmas S."/>
            <person name="Haldenby S."/>
            <person name="Madupu R."/>
            <person name="Robinson J."/>
            <person name="Khouri H."/>
            <person name="Ren Q."/>
            <person name="Lowe T.M."/>
            <person name="Maupin-Furlow J."/>
            <person name="Pohlschroder M."/>
            <person name="Daniels C."/>
            <person name="Pfeiffer F."/>
            <person name="Allers T."/>
            <person name="Eisen J.A."/>
        </authorList>
    </citation>
    <scope>NUCLEOTIDE SEQUENCE [LARGE SCALE GENOMIC DNA]</scope>
    <source>
        <strain>ATCC 29605 / DSM 3757 / JCM 8879 / NBRC 14742 / NCIMB 2012 / VKM B-1768 / DS2</strain>
    </source>
</reference>
<reference key="2">
    <citation type="journal article" date="2014" name="PLoS Genet.">
        <title>Phylogenetically driven sequencing of extremely halophilic archaea reveals strategies for static and dynamic osmo-response.</title>
        <authorList>
            <person name="Becker E.A."/>
            <person name="Seitzer P.M."/>
            <person name="Tritt A."/>
            <person name="Larsen D."/>
            <person name="Krusor M."/>
            <person name="Yao A.I."/>
            <person name="Wu D."/>
            <person name="Madern D."/>
            <person name="Eisen J.A."/>
            <person name="Darling A.E."/>
            <person name="Facciotti M.T."/>
        </authorList>
    </citation>
    <scope>NUCLEOTIDE SEQUENCE [LARGE SCALE GENOMIC DNA]</scope>
    <source>
        <strain>ATCC 29605 / DSM 3757 / JCM 8879 / NBRC 14742 / NCIMB 2012 / VKM B-1768 / DS2</strain>
    </source>
</reference>
<reference key="3">
    <citation type="journal article" date="2012" name="J. Biol. Chem.">
        <title>An archaeal immune system can detect multiple protospacer adjacent motifs (PAMs) to target invader DNA.</title>
        <authorList>
            <person name="Fischer S."/>
            <person name="Maier L.K."/>
            <person name="Stoll B."/>
            <person name="Brendel J."/>
            <person name="Fischer E."/>
            <person name="Pfeiffer F."/>
            <person name="Dyall-Smith M."/>
            <person name="Marchfelder A."/>
        </authorList>
    </citation>
    <scope>FUNCTION</scope>
    <scope>DISRUPTION PHENOTYPE</scope>
    <source>
        <strain>DS2 / DS70 / H26</strain>
    </source>
</reference>
<sequence>MTYPLISHPEANDGERTYPDEQLTDDGSLRLTAHNTVVSEYATRLFRGPETQRRFLCVAASLHDFGKATPQFQAYVRDEYEGPEKEKNHARLGALATWFVLDQRDAPARDKLAATLAVARHHQALPDAAQYTAESLADAFETSNSVLTAQLEAISERWPQKATELLQRSGETDSTWDEFRTWVQSGTVVGELHEVSARRELTGPKATSDKLPRKLYDRTLHYWAAITLADKSHAMAVPESHVFDVETLDRETLEEYISGLRAEPPDDELERALNDERERARRQAIDGVHEWLGGDAQTPPIATLTLPTGLGKTFTGLSAAFEARGILESDGGPTRPIVYALPYTSIIEQTRSIFERPELWGADPTKSALTVHHYLSETVVYRNERESEDVASTDQEEHASFLGEAWRDGTVLTTFVQLFESLVGPSNRQGLKLSALDDGLVILDEPQALPKEWWDGITRLIELLTTEYQTRVIAMTATQPTLLRDVETTSLLDVGREHDKTGCLRCEVGPDYPVRLEPARKETYFENAERVRYRIDESALSFHLSADERYLSHETAAARVVAATAAGEGGSTLAICNTINSSATLTQELCGHDGVTHLGEAIDSVLGANDVDATKQENNVSAIVDAILRRSGLRGVDGELSVPAGTDIVVATLNSRYRPFDRRLLIEIADTLSGSEIPFVLISTQAIEAGVDLSFKRVFRDIAPLDSIVQAGGRCNRSYEWGRNGGQVVVWTLADPDEENPGDPTKSPPAHWVYERGSSDAGIQTHLQLISSILAQFEDEEVPDAEISHHAVNEYFDALREKSLSSTKIRTLIDDAKAGKLARESLIGGYQTVDVLVATTQAERKRLNELTELFTSDDPTDRSTGYKKLEQAAGIRVSLPLNSIEQLPDVSRVDGKERNEDGVQVFRYTGTESLEYDLQTGGLRGKEDTVAGRFTTF</sequence>
<dbReference type="EC" id="3.1.-.-"/>
<dbReference type="EC" id="3.6.4.-"/>
<dbReference type="EMBL" id="CP001955">
    <property type="protein sequence ID" value="ADE02249.1"/>
    <property type="molecule type" value="Genomic_DNA"/>
</dbReference>
<dbReference type="EMBL" id="AOHU01000052">
    <property type="protein sequence ID" value="ELY32095.1"/>
    <property type="molecule type" value="Genomic_DNA"/>
</dbReference>
<dbReference type="RefSeq" id="WP_004043129.1">
    <property type="nucleotide sequence ID" value="NC_013966.1"/>
</dbReference>
<dbReference type="PaxDb" id="309800-C498_09721"/>
<dbReference type="EnsemblBacteria" id="ADE02249">
    <property type="protein sequence ID" value="ADE02249"/>
    <property type="gene ID" value="HVO_A0209"/>
</dbReference>
<dbReference type="GeneID" id="8923549"/>
<dbReference type="KEGG" id="hvo:HVO_A0209"/>
<dbReference type="PATRIC" id="fig|309800.29.peg.1899"/>
<dbReference type="eggNOG" id="arCOG01445">
    <property type="taxonomic scope" value="Archaea"/>
</dbReference>
<dbReference type="HOGENOM" id="CLU_010123_1_1_2"/>
<dbReference type="OrthoDB" id="43851at2157"/>
<dbReference type="Proteomes" id="UP000008243">
    <property type="component" value="Plasmid pHV4"/>
</dbReference>
<dbReference type="Proteomes" id="UP000011532">
    <property type="component" value="Unassembled WGS sequence"/>
</dbReference>
<dbReference type="GO" id="GO:0005524">
    <property type="term" value="F:ATP binding"/>
    <property type="evidence" value="ECO:0007669"/>
    <property type="project" value="UniProtKB-KW"/>
</dbReference>
<dbReference type="GO" id="GO:0004386">
    <property type="term" value="F:helicase activity"/>
    <property type="evidence" value="ECO:0007669"/>
    <property type="project" value="UniProtKB-KW"/>
</dbReference>
<dbReference type="GO" id="GO:0046872">
    <property type="term" value="F:metal ion binding"/>
    <property type="evidence" value="ECO:0007669"/>
    <property type="project" value="UniProtKB-KW"/>
</dbReference>
<dbReference type="GO" id="GO:0004518">
    <property type="term" value="F:nuclease activity"/>
    <property type="evidence" value="ECO:0007669"/>
    <property type="project" value="UniProtKB-KW"/>
</dbReference>
<dbReference type="GO" id="GO:0051607">
    <property type="term" value="P:defense response to virus"/>
    <property type="evidence" value="ECO:0007669"/>
    <property type="project" value="UniProtKB-KW"/>
</dbReference>
<dbReference type="CDD" id="cd09641">
    <property type="entry name" value="Cas3''_I"/>
    <property type="match status" value="1"/>
</dbReference>
<dbReference type="CDD" id="cd17930">
    <property type="entry name" value="DEXHc_cas3"/>
    <property type="match status" value="1"/>
</dbReference>
<dbReference type="Gene3D" id="1.10.3210.30">
    <property type="match status" value="1"/>
</dbReference>
<dbReference type="Gene3D" id="3.40.50.300">
    <property type="entry name" value="P-loop containing nucleotide triphosphate hydrolases"/>
    <property type="match status" value="1"/>
</dbReference>
<dbReference type="InterPro" id="IPR054712">
    <property type="entry name" value="Cas3-like_dom"/>
</dbReference>
<dbReference type="InterPro" id="IPR006483">
    <property type="entry name" value="CRISPR-assoc_Cas3_HD"/>
</dbReference>
<dbReference type="InterPro" id="IPR038257">
    <property type="entry name" value="CRISPR-assoc_Cas3_HD_sf"/>
</dbReference>
<dbReference type="InterPro" id="IPR027417">
    <property type="entry name" value="P-loop_NTPase"/>
</dbReference>
<dbReference type="NCBIfam" id="TIGR01596">
    <property type="entry name" value="cas3_HD"/>
    <property type="match status" value="1"/>
</dbReference>
<dbReference type="Pfam" id="PF22590">
    <property type="entry name" value="Cas3-like_C_2"/>
    <property type="match status" value="1"/>
</dbReference>
<dbReference type="Pfam" id="PF18019">
    <property type="entry name" value="Cas3_HD"/>
    <property type="match status" value="1"/>
</dbReference>
<dbReference type="SUPFAM" id="SSF109604">
    <property type="entry name" value="HD-domain/PDEase-like"/>
    <property type="match status" value="1"/>
</dbReference>
<dbReference type="SUPFAM" id="SSF52540">
    <property type="entry name" value="P-loop containing nucleoside triphosphate hydrolases"/>
    <property type="match status" value="1"/>
</dbReference>
<dbReference type="PROSITE" id="PS51643">
    <property type="entry name" value="HD_CAS3"/>
    <property type="match status" value="1"/>
</dbReference>
<evidence type="ECO:0000250" key="1">
    <source>
        <dbReference type="UniProtKB" id="P38036"/>
    </source>
</evidence>
<evidence type="ECO:0000250" key="2">
    <source>
        <dbReference type="UniProtKB" id="Q53VY2"/>
    </source>
</evidence>
<evidence type="ECO:0000255" key="3">
    <source>
        <dbReference type="PROSITE-ProRule" id="PRU00974"/>
    </source>
</evidence>
<evidence type="ECO:0000269" key="4">
    <source>
    </source>
</evidence>
<evidence type="ECO:0000303" key="5">
    <source>
    </source>
</evidence>
<evidence type="ECO:0000303" key="6">
    <source>
    </source>
</evidence>
<evidence type="ECO:0000305" key="7"/>
<geneLocation type="plasmid">
    <name>pHV4</name>
</geneLocation>
<proteinExistence type="inferred from homology"/>
<organism>
    <name type="scientific">Haloferax volcanii (strain ATCC 29605 / DSM 3757 / JCM 8879 / NBRC 14742 / NCIMB 2012 / VKM B-1768 / DS2)</name>
    <name type="common">Halobacterium volcanii</name>
    <dbReference type="NCBI Taxonomy" id="309800"/>
    <lineage>
        <taxon>Archaea</taxon>
        <taxon>Methanobacteriati</taxon>
        <taxon>Methanobacteriota</taxon>
        <taxon>Stenosarchaea group</taxon>
        <taxon>Halobacteria</taxon>
        <taxon>Halobacteriales</taxon>
        <taxon>Haloferacaceae</taxon>
        <taxon>Haloferax</taxon>
    </lineage>
</organism>